<sequence length="380" mass="41637">MNTQLPPKQRIVVGLSGGVDSAVSAWLLKQQGHEVVAIFMKNWEDDDDSEFCSSRQDFLDAASVADVLGIEIEHVNFAAEYKDRVFAEFLREYSAGRTPNPDVLCNAEIKFKAFLDHAMRLGADRIATGHYARVRHNPATGLHELLKGLDPLKDQSYFLHRLNQAQLASTLFPVGELPKTEVRRIALEIGLPNAKKKDSTGICFIGERPFREFLNRYLSHEPGPIKDDRGRRIGEHVGLSFYTLGQRKGIGIGGLKEKGAPRGGGEHEPWFVARKDLASNTLYAVQGHDHPWLQSQRLSADDASWIGTVPQPGQGGLAAKTRYRQADSACAVDALDAAARTLSMSFPAPQWAVTPGQSVVLYEGEVCLGGAVIAAADQRA</sequence>
<protein>
    <recommendedName>
        <fullName evidence="1">tRNA-specific 2-thiouridylase MnmA</fullName>
        <ecNumber evidence="1">2.8.1.13</ecNumber>
    </recommendedName>
</protein>
<keyword id="KW-0067">ATP-binding</keyword>
<keyword id="KW-0963">Cytoplasm</keyword>
<keyword id="KW-1015">Disulfide bond</keyword>
<keyword id="KW-0547">Nucleotide-binding</keyword>
<keyword id="KW-1185">Reference proteome</keyword>
<keyword id="KW-0694">RNA-binding</keyword>
<keyword id="KW-0808">Transferase</keyword>
<keyword id="KW-0819">tRNA processing</keyword>
<keyword id="KW-0820">tRNA-binding</keyword>
<organism>
    <name type="scientific">Leptothrix cholodnii (strain ATCC 51168 / LMG 8142 / SP-6)</name>
    <name type="common">Leptothrix discophora (strain SP-6)</name>
    <dbReference type="NCBI Taxonomy" id="395495"/>
    <lineage>
        <taxon>Bacteria</taxon>
        <taxon>Pseudomonadati</taxon>
        <taxon>Pseudomonadota</taxon>
        <taxon>Betaproteobacteria</taxon>
        <taxon>Burkholderiales</taxon>
        <taxon>Sphaerotilaceae</taxon>
        <taxon>Leptothrix</taxon>
    </lineage>
</organism>
<dbReference type="EC" id="2.8.1.13" evidence="1"/>
<dbReference type="EMBL" id="CP001013">
    <property type="protein sequence ID" value="ACB32706.1"/>
    <property type="molecule type" value="Genomic_DNA"/>
</dbReference>
<dbReference type="RefSeq" id="WP_012345468.1">
    <property type="nucleotide sequence ID" value="NC_010524.1"/>
</dbReference>
<dbReference type="SMR" id="B1XX60"/>
<dbReference type="STRING" id="395495.Lcho_0431"/>
<dbReference type="KEGG" id="lch:Lcho_0431"/>
<dbReference type="eggNOG" id="COG0482">
    <property type="taxonomic scope" value="Bacteria"/>
</dbReference>
<dbReference type="HOGENOM" id="CLU_035188_1_0_4"/>
<dbReference type="OrthoDB" id="9800696at2"/>
<dbReference type="Proteomes" id="UP000001693">
    <property type="component" value="Chromosome"/>
</dbReference>
<dbReference type="GO" id="GO:0005737">
    <property type="term" value="C:cytoplasm"/>
    <property type="evidence" value="ECO:0007669"/>
    <property type="project" value="UniProtKB-SubCell"/>
</dbReference>
<dbReference type="GO" id="GO:0005524">
    <property type="term" value="F:ATP binding"/>
    <property type="evidence" value="ECO:0007669"/>
    <property type="project" value="UniProtKB-KW"/>
</dbReference>
<dbReference type="GO" id="GO:0000049">
    <property type="term" value="F:tRNA binding"/>
    <property type="evidence" value="ECO:0007669"/>
    <property type="project" value="UniProtKB-KW"/>
</dbReference>
<dbReference type="GO" id="GO:0103016">
    <property type="term" value="F:tRNA-uridine 2-sulfurtransferase activity"/>
    <property type="evidence" value="ECO:0007669"/>
    <property type="project" value="UniProtKB-EC"/>
</dbReference>
<dbReference type="GO" id="GO:0002143">
    <property type="term" value="P:tRNA wobble position uridine thiolation"/>
    <property type="evidence" value="ECO:0007669"/>
    <property type="project" value="TreeGrafter"/>
</dbReference>
<dbReference type="CDD" id="cd01998">
    <property type="entry name" value="MnmA_TRMU-like"/>
    <property type="match status" value="1"/>
</dbReference>
<dbReference type="FunFam" id="2.30.30.280:FF:000001">
    <property type="entry name" value="tRNA-specific 2-thiouridylase MnmA"/>
    <property type="match status" value="1"/>
</dbReference>
<dbReference type="FunFam" id="2.40.30.10:FF:000023">
    <property type="entry name" value="tRNA-specific 2-thiouridylase MnmA"/>
    <property type="match status" value="1"/>
</dbReference>
<dbReference type="FunFam" id="3.40.50.620:FF:000004">
    <property type="entry name" value="tRNA-specific 2-thiouridylase MnmA"/>
    <property type="match status" value="1"/>
</dbReference>
<dbReference type="Gene3D" id="2.30.30.280">
    <property type="entry name" value="Adenine nucleotide alpha hydrolases-like domains"/>
    <property type="match status" value="1"/>
</dbReference>
<dbReference type="Gene3D" id="3.40.50.620">
    <property type="entry name" value="HUPs"/>
    <property type="match status" value="1"/>
</dbReference>
<dbReference type="Gene3D" id="2.40.30.10">
    <property type="entry name" value="Translation factors"/>
    <property type="match status" value="1"/>
</dbReference>
<dbReference type="HAMAP" id="MF_00144">
    <property type="entry name" value="tRNA_thiouridyl_MnmA"/>
    <property type="match status" value="1"/>
</dbReference>
<dbReference type="InterPro" id="IPR004506">
    <property type="entry name" value="MnmA-like"/>
</dbReference>
<dbReference type="InterPro" id="IPR046885">
    <property type="entry name" value="MnmA-like_C"/>
</dbReference>
<dbReference type="InterPro" id="IPR046884">
    <property type="entry name" value="MnmA-like_central"/>
</dbReference>
<dbReference type="InterPro" id="IPR023382">
    <property type="entry name" value="MnmA-like_central_sf"/>
</dbReference>
<dbReference type="InterPro" id="IPR014729">
    <property type="entry name" value="Rossmann-like_a/b/a_fold"/>
</dbReference>
<dbReference type="NCBIfam" id="NF001138">
    <property type="entry name" value="PRK00143.1"/>
    <property type="match status" value="1"/>
</dbReference>
<dbReference type="NCBIfam" id="TIGR00420">
    <property type="entry name" value="trmU"/>
    <property type="match status" value="1"/>
</dbReference>
<dbReference type="PANTHER" id="PTHR11933:SF5">
    <property type="entry name" value="MITOCHONDRIAL TRNA-SPECIFIC 2-THIOURIDYLASE 1"/>
    <property type="match status" value="1"/>
</dbReference>
<dbReference type="PANTHER" id="PTHR11933">
    <property type="entry name" value="TRNA 5-METHYLAMINOMETHYL-2-THIOURIDYLATE -METHYLTRANSFERASE"/>
    <property type="match status" value="1"/>
</dbReference>
<dbReference type="Pfam" id="PF03054">
    <property type="entry name" value="tRNA_Me_trans"/>
    <property type="match status" value="1"/>
</dbReference>
<dbReference type="Pfam" id="PF20258">
    <property type="entry name" value="tRNA_Me_trans_C"/>
    <property type="match status" value="1"/>
</dbReference>
<dbReference type="Pfam" id="PF20259">
    <property type="entry name" value="tRNA_Me_trans_M"/>
    <property type="match status" value="1"/>
</dbReference>
<dbReference type="SUPFAM" id="SSF52402">
    <property type="entry name" value="Adenine nucleotide alpha hydrolases-like"/>
    <property type="match status" value="1"/>
</dbReference>
<reference key="1">
    <citation type="submission" date="2008-03" db="EMBL/GenBank/DDBJ databases">
        <title>Complete sequence of Leptothrix cholodnii SP-6.</title>
        <authorList>
            <consortium name="US DOE Joint Genome Institute"/>
            <person name="Copeland A."/>
            <person name="Lucas S."/>
            <person name="Lapidus A."/>
            <person name="Glavina del Rio T."/>
            <person name="Dalin E."/>
            <person name="Tice H."/>
            <person name="Bruce D."/>
            <person name="Goodwin L."/>
            <person name="Pitluck S."/>
            <person name="Chertkov O."/>
            <person name="Brettin T."/>
            <person name="Detter J.C."/>
            <person name="Han C."/>
            <person name="Kuske C.R."/>
            <person name="Schmutz J."/>
            <person name="Larimer F."/>
            <person name="Land M."/>
            <person name="Hauser L."/>
            <person name="Kyrpides N."/>
            <person name="Lykidis A."/>
            <person name="Emerson D."/>
            <person name="Richardson P."/>
        </authorList>
    </citation>
    <scope>NUCLEOTIDE SEQUENCE [LARGE SCALE GENOMIC DNA]</scope>
    <source>
        <strain>ATCC 51168 / LMG 8142 / SP-6</strain>
    </source>
</reference>
<feature type="chain" id="PRO_0000349686" description="tRNA-specific 2-thiouridylase MnmA">
    <location>
        <begin position="1"/>
        <end position="380"/>
    </location>
</feature>
<feature type="region of interest" description="Interaction with target base in tRNA" evidence="1">
    <location>
        <begin position="100"/>
        <end position="102"/>
    </location>
</feature>
<feature type="region of interest" description="Interaction with tRNA" evidence="1">
    <location>
        <begin position="153"/>
        <end position="155"/>
    </location>
</feature>
<feature type="region of interest" description="Interaction with tRNA" evidence="1">
    <location>
        <begin position="322"/>
        <end position="323"/>
    </location>
</feature>
<feature type="active site" description="Nucleophile" evidence="1">
    <location>
        <position position="105"/>
    </location>
</feature>
<feature type="active site" description="Cysteine persulfide intermediate" evidence="1">
    <location>
        <position position="203"/>
    </location>
</feature>
<feature type="binding site" evidence="1">
    <location>
        <begin position="14"/>
        <end position="21"/>
    </location>
    <ligand>
        <name>ATP</name>
        <dbReference type="ChEBI" id="CHEBI:30616"/>
    </ligand>
</feature>
<feature type="binding site" evidence="1">
    <location>
        <position position="40"/>
    </location>
    <ligand>
        <name>ATP</name>
        <dbReference type="ChEBI" id="CHEBI:30616"/>
    </ligand>
</feature>
<feature type="binding site" evidence="1">
    <location>
        <position position="129"/>
    </location>
    <ligand>
        <name>ATP</name>
        <dbReference type="ChEBI" id="CHEBI:30616"/>
    </ligand>
</feature>
<feature type="site" description="Interaction with tRNA" evidence="1">
    <location>
        <position position="130"/>
    </location>
</feature>
<feature type="site" description="Interaction with tRNA" evidence="1">
    <location>
        <position position="357"/>
    </location>
</feature>
<feature type="disulfide bond" description="Alternate" evidence="1">
    <location>
        <begin position="105"/>
        <end position="203"/>
    </location>
</feature>
<name>MNMA_LEPCP</name>
<evidence type="ECO:0000255" key="1">
    <source>
        <dbReference type="HAMAP-Rule" id="MF_00144"/>
    </source>
</evidence>
<gene>
    <name evidence="1" type="primary">mnmA</name>
    <name type="ordered locus">Lcho_0431</name>
</gene>
<proteinExistence type="inferred from homology"/>
<accession>B1XX60</accession>
<comment type="function">
    <text evidence="1">Catalyzes the 2-thiolation of uridine at the wobble position (U34) of tRNA, leading to the formation of s(2)U34.</text>
</comment>
<comment type="catalytic activity">
    <reaction evidence="1">
        <text>S-sulfanyl-L-cysteinyl-[protein] + uridine(34) in tRNA + AH2 + ATP = 2-thiouridine(34) in tRNA + L-cysteinyl-[protein] + A + AMP + diphosphate + H(+)</text>
        <dbReference type="Rhea" id="RHEA:47032"/>
        <dbReference type="Rhea" id="RHEA-COMP:10131"/>
        <dbReference type="Rhea" id="RHEA-COMP:11726"/>
        <dbReference type="Rhea" id="RHEA-COMP:11727"/>
        <dbReference type="Rhea" id="RHEA-COMP:11728"/>
        <dbReference type="ChEBI" id="CHEBI:13193"/>
        <dbReference type="ChEBI" id="CHEBI:15378"/>
        <dbReference type="ChEBI" id="CHEBI:17499"/>
        <dbReference type="ChEBI" id="CHEBI:29950"/>
        <dbReference type="ChEBI" id="CHEBI:30616"/>
        <dbReference type="ChEBI" id="CHEBI:33019"/>
        <dbReference type="ChEBI" id="CHEBI:61963"/>
        <dbReference type="ChEBI" id="CHEBI:65315"/>
        <dbReference type="ChEBI" id="CHEBI:87170"/>
        <dbReference type="ChEBI" id="CHEBI:456215"/>
        <dbReference type="EC" id="2.8.1.13"/>
    </reaction>
</comment>
<comment type="subcellular location">
    <subcellularLocation>
        <location evidence="1">Cytoplasm</location>
    </subcellularLocation>
</comment>
<comment type="similarity">
    <text evidence="1">Belongs to the MnmA/TRMU family.</text>
</comment>